<dbReference type="EMBL" id="CU928160">
    <property type="protein sequence ID" value="CAR00884.1"/>
    <property type="molecule type" value="Genomic_DNA"/>
</dbReference>
<dbReference type="RefSeq" id="WP_000063504.1">
    <property type="nucleotide sequence ID" value="NC_011741.1"/>
</dbReference>
<dbReference type="KEGG" id="ecr:ECIAI1_4113"/>
<dbReference type="HOGENOM" id="CLU_066437_0_0_6"/>
<dbReference type="GO" id="GO:0005886">
    <property type="term" value="C:plasma membrane"/>
    <property type="evidence" value="ECO:0007669"/>
    <property type="project" value="UniProtKB-SubCell"/>
</dbReference>
<dbReference type="GO" id="GO:0015153">
    <property type="term" value="F:rhamnose transmembrane transporter activity"/>
    <property type="evidence" value="ECO:0007669"/>
    <property type="project" value="UniProtKB-UniRule"/>
</dbReference>
<dbReference type="GO" id="GO:0015293">
    <property type="term" value="F:symporter activity"/>
    <property type="evidence" value="ECO:0007669"/>
    <property type="project" value="UniProtKB-KW"/>
</dbReference>
<dbReference type="HAMAP" id="MF_01532">
    <property type="entry name" value="RhaT"/>
    <property type="match status" value="1"/>
</dbReference>
<dbReference type="InterPro" id="IPR004673">
    <property type="entry name" value="L-rhamnose-proton_sym_RhaT"/>
</dbReference>
<dbReference type="NCBIfam" id="NF010021">
    <property type="entry name" value="PRK13499.1-1"/>
    <property type="match status" value="1"/>
</dbReference>
<dbReference type="NCBIfam" id="NF010023">
    <property type="entry name" value="PRK13499.1-3"/>
    <property type="match status" value="1"/>
</dbReference>
<dbReference type="NCBIfam" id="TIGR00776">
    <property type="entry name" value="RhaT"/>
    <property type="match status" value="1"/>
</dbReference>
<dbReference type="Pfam" id="PF06379">
    <property type="entry name" value="RhaT"/>
    <property type="match status" value="1"/>
</dbReference>
<proteinExistence type="inferred from homology"/>
<comment type="function">
    <text evidence="1">Uptake of L-rhamnose across the cytoplasmic membrane with the concomitant transport of protons into the cell (symport system).</text>
</comment>
<comment type="catalytic activity">
    <reaction evidence="1">
        <text>L-rhamnopyranose(in) + H(+)(in) = L-rhamnopyranose(out) + H(+)(out)</text>
        <dbReference type="Rhea" id="RHEA:29947"/>
        <dbReference type="ChEBI" id="CHEBI:15378"/>
        <dbReference type="ChEBI" id="CHEBI:62346"/>
    </reaction>
    <physiologicalReaction direction="right-to-left" evidence="1">
        <dbReference type="Rhea" id="RHEA:29949"/>
    </physiologicalReaction>
</comment>
<comment type="subcellular location">
    <subcellularLocation>
        <location evidence="1">Cell inner membrane</location>
        <topology evidence="1">Multi-pass membrane protein</topology>
    </subcellularLocation>
</comment>
<comment type="similarity">
    <text evidence="1">Belongs to the L-rhamnose transporter (TC 2.A.7.6) family.</text>
</comment>
<feature type="chain" id="PRO_1000193748" description="L-rhamnose-proton symporter">
    <location>
        <begin position="1"/>
        <end position="344"/>
    </location>
</feature>
<feature type="transmembrane region" description="Helical" evidence="1">
    <location>
        <begin position="4"/>
        <end position="24"/>
    </location>
</feature>
<feature type="transmembrane region" description="Helical" evidence="1">
    <location>
        <begin position="38"/>
        <end position="58"/>
    </location>
</feature>
<feature type="transmembrane region" description="Helical" evidence="1">
    <location>
        <begin position="68"/>
        <end position="88"/>
    </location>
</feature>
<feature type="transmembrane region" description="Helical" evidence="1">
    <location>
        <begin position="101"/>
        <end position="121"/>
    </location>
</feature>
<feature type="transmembrane region" description="Helical" evidence="1">
    <location>
        <begin position="137"/>
        <end position="157"/>
    </location>
</feature>
<feature type="transmembrane region" description="Helical" evidence="1">
    <location>
        <begin position="175"/>
        <end position="195"/>
    </location>
</feature>
<feature type="transmembrane region" description="Helical" evidence="1">
    <location>
        <begin position="214"/>
        <end position="234"/>
    </location>
</feature>
<feature type="transmembrane region" description="Helical" evidence="1">
    <location>
        <begin position="259"/>
        <end position="279"/>
    </location>
</feature>
<feature type="transmembrane region" description="Helical" evidence="1">
    <location>
        <begin position="290"/>
        <end position="310"/>
    </location>
</feature>
<feature type="transmembrane region" description="Helical" evidence="1">
    <location>
        <begin position="323"/>
        <end position="343"/>
    </location>
</feature>
<sequence length="344" mass="37286">MSNAITMGIFWHLIGAASAACFYAPFKKVKKWSWETMWSVGGIVSWIILPWAISALLLPNFWAYYSSFSLSTLLPVFLFGAMWGIGNINYGLTMRYLGMSMGIGIAIGITLIVGTLMTPIINGNFDVLINTEGGRMTLLGVLVALIGVGIVTRAGQLKERKMGIKAEEFNLKKGLVLAVMCGIFSAGMSFAMNAAKPMHEAAAALGVDPLYVALPSYVIIMGGGAIINLGFCFIRLAKVKDLSLKADFSLAKPLITHNVLLSALGGLMWYLQFFFYAWGHARIPAQYDYISWMLHMSFYVLCGGIVGLVLKEWNNAGRRPVTVLSLGCVVIIVAANIVGIGMAN</sequence>
<protein>
    <recommendedName>
        <fullName evidence="1">L-rhamnose-proton symporter</fullName>
    </recommendedName>
    <alternativeName>
        <fullName evidence="1">L-rhamnose-H(+) transport protein</fullName>
    </alternativeName>
</protein>
<gene>
    <name evidence="1" type="primary">rhaT</name>
    <name type="ordered locus">ECIAI1_4113</name>
</gene>
<reference key="1">
    <citation type="journal article" date="2009" name="PLoS Genet.">
        <title>Organised genome dynamics in the Escherichia coli species results in highly diverse adaptive paths.</title>
        <authorList>
            <person name="Touchon M."/>
            <person name="Hoede C."/>
            <person name="Tenaillon O."/>
            <person name="Barbe V."/>
            <person name="Baeriswyl S."/>
            <person name="Bidet P."/>
            <person name="Bingen E."/>
            <person name="Bonacorsi S."/>
            <person name="Bouchier C."/>
            <person name="Bouvet O."/>
            <person name="Calteau A."/>
            <person name="Chiapello H."/>
            <person name="Clermont O."/>
            <person name="Cruveiller S."/>
            <person name="Danchin A."/>
            <person name="Diard M."/>
            <person name="Dossat C."/>
            <person name="Karoui M.E."/>
            <person name="Frapy E."/>
            <person name="Garry L."/>
            <person name="Ghigo J.M."/>
            <person name="Gilles A.M."/>
            <person name="Johnson J."/>
            <person name="Le Bouguenec C."/>
            <person name="Lescat M."/>
            <person name="Mangenot S."/>
            <person name="Martinez-Jehanne V."/>
            <person name="Matic I."/>
            <person name="Nassif X."/>
            <person name="Oztas S."/>
            <person name="Petit M.A."/>
            <person name="Pichon C."/>
            <person name="Rouy Z."/>
            <person name="Ruf C.S."/>
            <person name="Schneider D."/>
            <person name="Tourret J."/>
            <person name="Vacherie B."/>
            <person name="Vallenet D."/>
            <person name="Medigue C."/>
            <person name="Rocha E.P.C."/>
            <person name="Denamur E."/>
        </authorList>
    </citation>
    <scope>NUCLEOTIDE SEQUENCE [LARGE SCALE GENOMIC DNA]</scope>
    <source>
        <strain>IAI1</strain>
    </source>
</reference>
<name>RHAT_ECO8A</name>
<organism>
    <name type="scientific">Escherichia coli O8 (strain IAI1)</name>
    <dbReference type="NCBI Taxonomy" id="585034"/>
    <lineage>
        <taxon>Bacteria</taxon>
        <taxon>Pseudomonadati</taxon>
        <taxon>Pseudomonadota</taxon>
        <taxon>Gammaproteobacteria</taxon>
        <taxon>Enterobacterales</taxon>
        <taxon>Enterobacteriaceae</taxon>
        <taxon>Escherichia</taxon>
    </lineage>
</organism>
<accession>B7M6V9</accession>
<evidence type="ECO:0000255" key="1">
    <source>
        <dbReference type="HAMAP-Rule" id="MF_01532"/>
    </source>
</evidence>
<keyword id="KW-0997">Cell inner membrane</keyword>
<keyword id="KW-1003">Cell membrane</keyword>
<keyword id="KW-0472">Membrane</keyword>
<keyword id="KW-0762">Sugar transport</keyword>
<keyword id="KW-0769">Symport</keyword>
<keyword id="KW-0812">Transmembrane</keyword>
<keyword id="KW-1133">Transmembrane helix</keyword>
<keyword id="KW-0813">Transport</keyword>